<feature type="chain" id="PRO_0000235325" description="Late cornified envelope protein 1B">
    <location>
        <begin position="1"/>
        <end position="118"/>
    </location>
</feature>
<feature type="region of interest" description="Disordered" evidence="1">
    <location>
        <begin position="87"/>
        <end position="118"/>
    </location>
</feature>
<feature type="compositionally biased region" description="Low complexity" evidence="1">
    <location>
        <begin position="90"/>
        <end position="103"/>
    </location>
</feature>
<feature type="compositionally biased region" description="Gly residues" evidence="1">
    <location>
        <begin position="104"/>
        <end position="118"/>
    </location>
</feature>
<comment type="function">
    <text>Precursors of the cornified envelope of the stratum corneum.</text>
</comment>
<comment type="subunit">
    <text evidence="3">Interacts with CYSRT1; the interaction is direct.</text>
</comment>
<comment type="interaction">
    <interactant intactId="EBI-10245913">
        <id>Q5T7P3</id>
    </interactant>
    <interactant intactId="EBI-10173507">
        <id>Q6UY14-3</id>
        <label>ADAMTSL4</label>
    </interactant>
    <organismsDiffer>false</organismsDiffer>
    <experiments>6</experiments>
</comment>
<comment type="interaction">
    <interactant intactId="EBI-10245913">
        <id>Q5T7P3</id>
    </interactant>
    <interactant intactId="EBI-724373">
        <id>Q7L4P6</id>
        <label>BEND5</label>
    </interactant>
    <organismsDiffer>false</organismsDiffer>
    <experiments>3</experiments>
</comment>
<comment type="interaction">
    <interactant intactId="EBI-10245913">
        <id>Q5T7P3</id>
    </interactant>
    <interactant intactId="EBI-3867333">
        <id>A8MQ03</id>
        <label>CYSRT1</label>
    </interactant>
    <organismsDiffer>false</organismsDiffer>
    <experiments>3</experiments>
</comment>
<comment type="interaction">
    <interactant intactId="EBI-10245913">
        <id>Q5T7P3</id>
    </interactant>
    <interactant intactId="EBI-11956479">
        <id>P23142-4</id>
        <label>FBLN1</label>
    </interactant>
    <organismsDiffer>false</organismsDiffer>
    <experiments>3</experiments>
</comment>
<comment type="interaction">
    <interactant intactId="EBI-10245913">
        <id>Q5T7P3</id>
    </interactant>
    <interactant intactId="EBI-9050116">
        <id>Q9BTY2</id>
        <label>FUCA2</label>
    </interactant>
    <organismsDiffer>false</organismsDiffer>
    <experiments>3</experiments>
</comment>
<comment type="interaction">
    <interactant intactId="EBI-10245913">
        <id>Q5T7P3</id>
    </interactant>
    <interactant intactId="EBI-747754">
        <id>P28799</id>
        <label>GRN</label>
    </interactant>
    <organismsDiffer>false</organismsDiffer>
    <experiments>3</experiments>
</comment>
<comment type="interaction">
    <interactant intactId="EBI-10245913">
        <id>Q5T7P3</id>
    </interactant>
    <interactant intactId="EBI-740785">
        <id>P49639</id>
        <label>HOXA1</label>
    </interactant>
    <organismsDiffer>false</organismsDiffer>
    <experiments>13</experiments>
</comment>
<comment type="interaction">
    <interactant intactId="EBI-10245913">
        <id>Q5T7P3</id>
    </interactant>
    <interactant intactId="EBI-466029">
        <id>P42858</id>
        <label>HTT</label>
    </interactant>
    <organismsDiffer>false</organismsDiffer>
    <experiments>15</experiments>
</comment>
<comment type="interaction">
    <interactant intactId="EBI-10245913">
        <id>Q5T7P3</id>
    </interactant>
    <interactant intactId="EBI-10975473">
        <id>O60333-2</id>
        <label>KIF1B</label>
    </interactant>
    <organismsDiffer>false</organismsDiffer>
    <experiments>3</experiments>
</comment>
<comment type="interaction">
    <interactant intactId="EBI-10245913">
        <id>Q5T7P3</id>
    </interactant>
    <interactant intactId="EBI-948001">
        <id>Q15323</id>
        <label>KRT31</label>
    </interactant>
    <organismsDiffer>false</organismsDiffer>
    <experiments>3</experiments>
</comment>
<comment type="interaction">
    <interactant intactId="EBI-10245913">
        <id>Q5T7P3</id>
    </interactant>
    <interactant intactId="EBI-11749135">
        <id>Q8IUG1</id>
        <label>KRTAP1-3</label>
    </interactant>
    <organismsDiffer>false</organismsDiffer>
    <experiments>5</experiments>
</comment>
<comment type="interaction">
    <interactant intactId="EBI-10245913">
        <id>Q5T7P3</id>
    </interactant>
    <interactant intactId="EBI-11741292">
        <id>Q9BYS1</id>
        <label>KRTAP1-5</label>
    </interactant>
    <organismsDiffer>false</organismsDiffer>
    <experiments>4</experiments>
</comment>
<comment type="interaction">
    <interactant intactId="EBI-10245913">
        <id>Q5T7P3</id>
    </interactant>
    <interactant intactId="EBI-10217483">
        <id>P60412</id>
        <label>KRTAP10-11</label>
    </interactant>
    <organismsDiffer>false</organismsDiffer>
    <experiments>3</experiments>
</comment>
<comment type="interaction">
    <interactant intactId="EBI-10245913">
        <id>Q5T7P3</id>
    </interactant>
    <interactant intactId="EBI-10172150">
        <id>P60370</id>
        <label>KRTAP10-5</label>
    </interactant>
    <organismsDiffer>false</organismsDiffer>
    <experiments>10</experiments>
</comment>
<comment type="interaction">
    <interactant intactId="EBI-10245913">
        <id>Q5T7P3</id>
    </interactant>
    <interactant intactId="EBI-10172290">
        <id>P60409</id>
        <label>KRTAP10-7</label>
    </interactant>
    <organismsDiffer>false</organismsDiffer>
    <experiments>9</experiments>
</comment>
<comment type="interaction">
    <interactant intactId="EBI-10245913">
        <id>Q5T7P3</id>
    </interactant>
    <interactant intactId="EBI-10171774">
        <id>P60410</id>
        <label>KRTAP10-8</label>
    </interactant>
    <organismsDiffer>false</organismsDiffer>
    <experiments>10</experiments>
</comment>
<comment type="interaction">
    <interactant intactId="EBI-10245913">
        <id>Q5T7P3</id>
    </interactant>
    <interactant intactId="EBI-10172052">
        <id>P60411</id>
        <label>KRTAP10-9</label>
    </interactant>
    <organismsDiffer>false</organismsDiffer>
    <experiments>12</experiments>
</comment>
<comment type="interaction">
    <interactant intactId="EBI-10245913">
        <id>Q5T7P3</id>
    </interactant>
    <interactant intactId="EBI-1052037">
        <id>Q8IUC1</id>
        <label>KRTAP11-1</label>
    </interactant>
    <organismsDiffer>false</organismsDiffer>
    <experiments>3</experiments>
</comment>
<comment type="interaction">
    <interactant intactId="EBI-10245913">
        <id>Q5T7P3</id>
    </interactant>
    <interactant intactId="EBI-10210845">
        <id>P59990</id>
        <label>KRTAP12-1</label>
    </interactant>
    <organismsDiffer>false</organismsDiffer>
    <experiments>3</experiments>
</comment>
<comment type="interaction">
    <interactant intactId="EBI-10245913">
        <id>Q5T7P3</id>
    </interactant>
    <interactant intactId="EBI-11953334">
        <id>P60328</id>
        <label>KRTAP12-3</label>
    </interactant>
    <organismsDiffer>false</organismsDiffer>
    <experiments>4</experiments>
</comment>
<comment type="interaction">
    <interactant intactId="EBI-10245913">
        <id>Q5T7P3</id>
    </interactant>
    <interactant intactId="EBI-11988175">
        <id>Q9BYP8</id>
        <label>KRTAP17-1</label>
    </interactant>
    <organismsDiffer>false</organismsDiffer>
    <experiments>3</experiments>
</comment>
<comment type="interaction">
    <interactant intactId="EBI-10245913">
        <id>Q5T7P3</id>
    </interactant>
    <interactant intactId="EBI-14065470">
        <id>Q9BYR9</id>
        <label>KRTAP2-4</label>
    </interactant>
    <organismsDiffer>false</organismsDiffer>
    <experiments>3</experiments>
</comment>
<comment type="interaction">
    <interactant intactId="EBI-10245913">
        <id>Q5T7P3</id>
    </interactant>
    <interactant intactId="EBI-9996449">
        <id>Q9BYR8</id>
        <label>KRTAP3-1</label>
    </interactant>
    <organismsDiffer>false</organismsDiffer>
    <experiments>3</experiments>
</comment>
<comment type="interaction">
    <interactant intactId="EBI-10245913">
        <id>Q5T7P3</id>
    </interactant>
    <interactant intactId="EBI-751260">
        <id>Q9BYR7</id>
        <label>KRTAP3-2</label>
    </interactant>
    <organismsDiffer>false</organismsDiffer>
    <experiments>8</experiments>
</comment>
<comment type="interaction">
    <interactant intactId="EBI-10245913">
        <id>Q5T7P3</id>
    </interactant>
    <interactant intactId="EBI-34579671">
        <id>Q9BYQ7</id>
        <label>KRTAP4-1</label>
    </interactant>
    <organismsDiffer>false</organismsDiffer>
    <experiments>3</experiments>
</comment>
<comment type="interaction">
    <interactant intactId="EBI-10245913">
        <id>Q5T7P3</id>
    </interactant>
    <interactant intactId="EBI-10302392">
        <id>Q9BYQ6</id>
        <label>KRTAP4-11</label>
    </interactant>
    <organismsDiffer>false</organismsDiffer>
    <experiments>6</experiments>
</comment>
<comment type="interaction">
    <interactant intactId="EBI-10245913">
        <id>Q5T7P3</id>
    </interactant>
    <interactant intactId="EBI-739863">
        <id>Q9BQ66</id>
        <label>KRTAP4-12</label>
    </interactant>
    <organismsDiffer>false</organismsDiffer>
    <experiments>7</experiments>
</comment>
<comment type="interaction">
    <interactant intactId="EBI-10245913">
        <id>Q5T7P3</id>
    </interactant>
    <interactant intactId="EBI-10172511">
        <id>Q9BYR5</id>
        <label>KRTAP4-2</label>
    </interactant>
    <organismsDiffer>false</organismsDiffer>
    <experiments>7</experiments>
</comment>
<comment type="interaction">
    <interactant intactId="EBI-10245913">
        <id>Q5T7P3</id>
    </interactant>
    <interactant intactId="EBI-11958132">
        <id>Q9BYR3</id>
        <label>KRTAP4-4</label>
    </interactant>
    <organismsDiffer>false</organismsDiffer>
    <experiments>3</experiments>
</comment>
<comment type="interaction">
    <interactant intactId="EBI-10245913">
        <id>Q5T7P3</id>
    </interactant>
    <interactant intactId="EBI-11993254">
        <id>Q9BYR2</id>
        <label>KRTAP4-5</label>
    </interactant>
    <organismsDiffer>false</organismsDiffer>
    <experiments>3</experiments>
</comment>
<comment type="interaction">
    <interactant intactId="EBI-10245913">
        <id>Q5T7P3</id>
    </interactant>
    <interactant intactId="EBI-11993296">
        <id>Q6L8G4</id>
        <label>KRTAP5-11</label>
    </interactant>
    <organismsDiffer>false</organismsDiffer>
    <experiments>3</experiments>
</comment>
<comment type="interaction">
    <interactant intactId="EBI-10245913">
        <id>Q5T7P3</id>
    </interactant>
    <interactant intactId="EBI-11958178">
        <id>Q701N4</id>
        <label>KRTAP5-2</label>
    </interactant>
    <organismsDiffer>false</organismsDiffer>
    <experiments>3</experiments>
</comment>
<comment type="interaction">
    <interactant intactId="EBI-10245913">
        <id>Q5T7P3</id>
    </interactant>
    <interactant intactId="EBI-11974251">
        <id>Q6L8H2</id>
        <label>KRTAP5-3</label>
    </interactant>
    <organismsDiffer>false</organismsDiffer>
    <experiments>3</experiments>
</comment>
<comment type="interaction">
    <interactant intactId="EBI-10245913">
        <id>Q5T7P3</id>
    </interactant>
    <interactant intactId="EBI-11963072">
        <id>Q6L8H1</id>
        <label>KRTAP5-4</label>
    </interactant>
    <organismsDiffer>false</organismsDiffer>
    <experiments>5</experiments>
</comment>
<comment type="interaction">
    <interactant intactId="EBI-10245913">
        <id>Q5T7P3</id>
    </interactant>
    <interactant intactId="EBI-10250562">
        <id>Q6L8G9</id>
        <label>KRTAP5-6</label>
    </interactant>
    <organismsDiffer>false</organismsDiffer>
    <experiments>5</experiments>
</comment>
<comment type="interaction">
    <interactant intactId="EBI-10245913">
        <id>Q5T7P3</id>
    </interactant>
    <interactant intactId="EBI-11987425">
        <id>Q6L8G8</id>
        <label>KRTAP5-7</label>
    </interactant>
    <organismsDiffer>false</organismsDiffer>
    <experiments>3</experiments>
</comment>
<comment type="interaction">
    <interactant intactId="EBI-10245913">
        <id>Q5T7P3</id>
    </interactant>
    <interactant intactId="EBI-3958099">
        <id>P26371</id>
        <label>KRTAP5-9</label>
    </interactant>
    <organismsDiffer>false</organismsDiffer>
    <experiments>10</experiments>
</comment>
<comment type="interaction">
    <interactant intactId="EBI-10245913">
        <id>Q5T7P3</id>
    </interactant>
    <interactant intactId="EBI-22311199">
        <id>Q3LI67</id>
        <label>KRTAP6-3</label>
    </interactant>
    <organismsDiffer>false</organismsDiffer>
    <experiments>3</experiments>
</comment>
<comment type="interaction">
    <interactant intactId="EBI-10245913">
        <id>Q5T7P3</id>
    </interactant>
    <interactant intactId="EBI-1044640">
        <id>Q9BYQ4</id>
        <label>KRTAP9-2</label>
    </interactant>
    <organismsDiffer>false</organismsDiffer>
    <experiments>11</experiments>
</comment>
<comment type="interaction">
    <interactant intactId="EBI-10245913">
        <id>Q5T7P3</id>
    </interactant>
    <interactant intactId="EBI-1043191">
        <id>Q9BYQ3</id>
        <label>KRTAP9-3</label>
    </interactant>
    <organismsDiffer>false</organismsDiffer>
    <experiments>3</experiments>
</comment>
<comment type="interaction">
    <interactant intactId="EBI-10245913">
        <id>Q5T7P3</id>
    </interactant>
    <interactant intactId="EBI-10185730">
        <id>Q9BYQ2</id>
        <label>KRTAP9-4</label>
    </interactant>
    <organismsDiffer>false</organismsDiffer>
    <experiments>4</experiments>
</comment>
<comment type="interaction">
    <interactant intactId="EBI-10245913">
        <id>Q5T7P3</id>
    </interactant>
    <interactant intactId="EBI-11958364">
        <id>Q9BYQ0</id>
        <label>KRTAP9-8</label>
    </interactant>
    <organismsDiffer>false</organismsDiffer>
    <experiments>5</experiments>
</comment>
<comment type="interaction">
    <interactant intactId="EBI-10245913">
        <id>Q5T7P3</id>
    </interactant>
    <interactant intactId="EBI-11962058">
        <id>Q5T7P2</id>
        <label>LCE1A</label>
    </interactant>
    <organismsDiffer>false</organismsDiffer>
    <experiments>3</experiments>
</comment>
<comment type="interaction">
    <interactant intactId="EBI-10245913">
        <id>Q5T7P3</id>
    </interactant>
    <interactant intactId="EBI-10245913">
        <id>Q5T7P3</id>
        <label>LCE1B</label>
    </interactant>
    <organismsDiffer>false</organismsDiffer>
    <experiments>3</experiments>
</comment>
<comment type="interaction">
    <interactant intactId="EBI-10245913">
        <id>Q5T7P3</id>
    </interactant>
    <interactant intactId="EBI-12224199">
        <id>Q5T751</id>
        <label>LCE1C</label>
    </interactant>
    <organismsDiffer>false</organismsDiffer>
    <experiments>3</experiments>
</comment>
<comment type="interaction">
    <interactant intactId="EBI-10245913">
        <id>Q5T7P3</id>
    </interactant>
    <interactant intactId="EBI-11741311">
        <id>Q5T752</id>
        <label>LCE1D</label>
    </interactant>
    <organismsDiffer>false</organismsDiffer>
    <experiments>3</experiments>
</comment>
<comment type="interaction">
    <interactant intactId="EBI-10245913">
        <id>Q5T7P3</id>
    </interactant>
    <interactant intactId="EBI-11955335">
        <id>Q5T753</id>
        <label>LCE1E</label>
    </interactant>
    <organismsDiffer>false</organismsDiffer>
    <experiments>3</experiments>
</comment>
<comment type="interaction">
    <interactant intactId="EBI-10245913">
        <id>Q5T7P3</id>
    </interactant>
    <interactant intactId="EBI-11958008">
        <id>Q5T754</id>
        <label>LCE1F</label>
    </interactant>
    <organismsDiffer>false</organismsDiffer>
    <experiments>3</experiments>
</comment>
<comment type="interaction">
    <interactant intactId="EBI-10245913">
        <id>Q5T7P3</id>
    </interactant>
    <interactant intactId="EBI-10246607">
        <id>Q5TA79</id>
        <label>LCE2A</label>
    </interactant>
    <organismsDiffer>false</organismsDiffer>
    <experiments>3</experiments>
</comment>
<comment type="interaction">
    <interactant intactId="EBI-10245913">
        <id>Q5T7P3</id>
    </interactant>
    <interactant intactId="EBI-11478468">
        <id>O14633</id>
        <label>LCE2B</label>
    </interactant>
    <organismsDiffer>false</organismsDiffer>
    <experiments>3</experiments>
</comment>
<comment type="interaction">
    <interactant intactId="EBI-10245913">
        <id>Q5T7P3</id>
    </interactant>
    <interactant intactId="EBI-11973993">
        <id>Q5TA81</id>
        <label>LCE2C</label>
    </interactant>
    <organismsDiffer>false</organismsDiffer>
    <experiments>3</experiments>
</comment>
<comment type="interaction">
    <interactant intactId="EBI-10245913">
        <id>Q5T7P3</id>
    </interactant>
    <interactant intactId="EBI-10246750">
        <id>Q5TA82</id>
        <label>LCE2D</label>
    </interactant>
    <organismsDiffer>false</organismsDiffer>
    <experiments>3</experiments>
</comment>
<comment type="interaction">
    <interactant intactId="EBI-10245913">
        <id>Q5T7P3</id>
    </interactant>
    <interactant intactId="EBI-11974495">
        <id>Q5TA77</id>
        <label>LCE3B</label>
    </interactant>
    <organismsDiffer>false</organismsDiffer>
    <experiments>6</experiments>
</comment>
<comment type="interaction">
    <interactant intactId="EBI-10245913">
        <id>Q5T7P3</id>
    </interactant>
    <interactant intactId="EBI-10245291">
        <id>Q5T5A8</id>
        <label>LCE3C</label>
    </interactant>
    <organismsDiffer>false</organismsDiffer>
    <experiments>3</experiments>
</comment>
<comment type="interaction">
    <interactant intactId="EBI-10245913">
        <id>Q5T7P3</id>
    </interactant>
    <interactant intactId="EBI-10246358">
        <id>Q5TA78</id>
        <label>LCE4A</label>
    </interactant>
    <organismsDiffer>false</organismsDiffer>
    <experiments>3</experiments>
</comment>
<comment type="interaction">
    <interactant intactId="EBI-10245913">
        <id>Q5T7P3</id>
    </interactant>
    <interactant intactId="EBI-11955689">
        <id>Q5TCM9</id>
        <label>LCE5A</label>
    </interactant>
    <organismsDiffer>false</organismsDiffer>
    <experiments>3</experiments>
</comment>
<comment type="interaction">
    <interactant intactId="EBI-10245913">
        <id>Q5T7P3</id>
    </interactant>
    <interactant intactId="EBI-724076">
        <id>Q99750</id>
        <label>MDFI</label>
    </interactant>
    <organismsDiffer>false</organismsDiffer>
    <experiments>4</experiments>
</comment>
<comment type="interaction">
    <interactant intactId="EBI-10245913">
        <id>Q5T7P3</id>
    </interactant>
    <interactant intactId="EBI-748397">
        <id>P50222</id>
        <label>MEOX2</label>
    </interactant>
    <organismsDiffer>false</organismsDiffer>
    <experiments>3</experiments>
</comment>
<comment type="interaction">
    <interactant intactId="EBI-10245913">
        <id>Q5T7P3</id>
    </interactant>
    <interactant intactId="EBI-7196415">
        <id>O96009</id>
        <label>NAPSA</label>
    </interactant>
    <organismsDiffer>false</organismsDiffer>
    <experiments>3</experiments>
</comment>
<comment type="interaction">
    <interactant intactId="EBI-10245913">
        <id>Q5T7P3</id>
    </interactant>
    <interactant intactId="EBI-945833">
        <id>Q7Z3S9</id>
        <label>NOTCH2NLA</label>
    </interactant>
    <organismsDiffer>false</organismsDiffer>
    <experiments>6</experiments>
</comment>
<comment type="interaction">
    <interactant intactId="EBI-10245913">
        <id>Q5T7P3</id>
    </interactant>
    <interactant intactId="EBI-22310682">
        <id>P0DPK4</id>
        <label>NOTCH2NLC</label>
    </interactant>
    <organismsDiffer>false</organismsDiffer>
    <experiments>3</experiments>
</comment>
<comment type="interaction">
    <interactant intactId="EBI-10245913">
        <id>Q5T7P3</id>
    </interactant>
    <interactant intactId="EBI-1210753">
        <id>Q7Z417</id>
        <label>NUFIP2</label>
    </interactant>
    <organismsDiffer>false</organismsDiffer>
    <experiments>3</experiments>
</comment>
<comment type="interaction">
    <interactant intactId="EBI-10245913">
        <id>Q5T7P3</id>
    </interactant>
    <interactant intactId="EBI-740446">
        <id>P32242</id>
        <label>OTX1</label>
    </interactant>
    <organismsDiffer>false</organismsDiffer>
    <experiments>5</experiments>
</comment>
<comment type="interaction">
    <interactant intactId="EBI-10245913">
        <id>Q5T7P3</id>
    </interactant>
    <interactant intactId="EBI-395883">
        <id>P07237</id>
        <label>P4HB</label>
    </interactant>
    <organismsDiffer>false</organismsDiffer>
    <experiments>3</experiments>
</comment>
<comment type="interaction">
    <interactant intactId="EBI-10245913">
        <id>Q5T7P3</id>
    </interactant>
    <interactant intactId="EBI-3918154">
        <id>Q9UGC6</id>
        <label>RGS17</label>
    </interactant>
    <organismsDiffer>false</organismsDiffer>
    <experiments>3</experiments>
</comment>
<comment type="interaction">
    <interactant intactId="EBI-10245913">
        <id>Q5T7P3</id>
    </interactant>
    <interactant intactId="EBI-1052678">
        <id>O76081</id>
        <label>RGS20</label>
    </interactant>
    <organismsDiffer>false</organismsDiffer>
    <experiments>5</experiments>
</comment>
<comment type="interaction">
    <interactant intactId="EBI-10245913">
        <id>Q5T7P3</id>
    </interactant>
    <interactant intactId="EBI-10178530">
        <id>O76081-6</id>
        <label>RGS20</label>
    </interactant>
    <organismsDiffer>false</organismsDiffer>
    <experiments>6</experiments>
</comment>
<comment type="interaction">
    <interactant intactId="EBI-10245913">
        <id>Q5T7P3</id>
    </interactant>
    <interactant intactId="EBI-396669">
        <id>Q9Y3C5</id>
        <label>RNF11</label>
    </interactant>
    <organismsDiffer>false</organismsDiffer>
    <experiments>3</experiments>
</comment>
<comment type="interaction">
    <interactant intactId="EBI-10245913">
        <id>Q5T7P3</id>
    </interactant>
    <interactant intactId="EBI-2340927">
        <id>P78317</id>
        <label>RNF4</label>
    </interactant>
    <organismsDiffer>false</organismsDiffer>
    <experiments>3</experiments>
</comment>
<comment type="interaction">
    <interactant intactId="EBI-10245913">
        <id>Q5T7P3</id>
    </interactant>
    <interactant intactId="EBI-750494">
        <id>P49901</id>
        <label>SMCP</label>
    </interactant>
    <organismsDiffer>false</organismsDiffer>
    <experiments>3</experiments>
</comment>
<comment type="interaction">
    <interactant intactId="EBI-10245913">
        <id>Q5T7P3</id>
    </interactant>
    <interactant intactId="EBI-3866665">
        <id>O43609</id>
        <label>SPRY1</label>
    </interactant>
    <organismsDiffer>false</organismsDiffer>
    <experiments>3</experiments>
</comment>
<comment type="interaction">
    <interactant intactId="EBI-10245913">
        <id>Q5T7P3</id>
    </interactant>
    <interactant intactId="EBI-742487">
        <id>O43597</id>
        <label>SPRY2</label>
    </interactant>
    <organismsDiffer>false</organismsDiffer>
    <experiments>5</experiments>
</comment>
<comment type="interaction">
    <interactant intactId="EBI-10245913">
        <id>Q5T7P3</id>
    </interactant>
    <interactant intactId="EBI-12290641">
        <id>O43610</id>
        <label>SPRY3</label>
    </interactant>
    <organismsDiffer>false</organismsDiffer>
    <experiments>3</experiments>
</comment>
<comment type="interaction">
    <interactant intactId="EBI-10245913">
        <id>Q5T7P3</id>
    </interactant>
    <interactant intactId="EBI-2562368">
        <id>P22735</id>
        <label>TGM1</label>
    </interactant>
    <organismsDiffer>false</organismsDiffer>
    <experiments>3</experiments>
</comment>
<comment type="interaction">
    <interactant intactId="EBI-10245913">
        <id>Q5T7P3</id>
    </interactant>
    <interactant intactId="EBI-5235829">
        <id>Q8IWZ5</id>
        <label>TRIM42</label>
    </interactant>
    <organismsDiffer>false</organismsDiffer>
    <experiments>6</experiments>
</comment>
<comment type="interaction">
    <interactant intactId="EBI-10245913">
        <id>Q5T7P3</id>
    </interactant>
    <interactant intactId="EBI-720609">
        <id>O76024</id>
        <label>WFS1</label>
    </interactant>
    <organismsDiffer>false</organismsDiffer>
    <experiments>3</experiments>
</comment>
<comment type="tissue specificity">
    <text evidence="2">Skin-specific. Expression was readily detected in adult trunk skin, adult arm skin, fetal skin, penal skin, vulva, esophagus and tongue. Not expressed in the cervix, rectum, lung, colon, or placenta.</text>
</comment>
<comment type="induction">
    <text evidence="2">By UVB.</text>
</comment>
<comment type="miscellaneous">
    <text>Belongs to the LCE cluster present on 1q21.</text>
</comment>
<comment type="similarity">
    <text evidence="4">Belongs to the LCE family.</text>
</comment>
<name>LCE1B_HUMAN</name>
<evidence type="ECO:0000256" key="1">
    <source>
        <dbReference type="SAM" id="MobiDB-lite"/>
    </source>
</evidence>
<evidence type="ECO:0000269" key="2">
    <source>
    </source>
</evidence>
<evidence type="ECO:0000269" key="3">
    <source>
    </source>
</evidence>
<evidence type="ECO:0000305" key="4"/>
<reference key="1">
    <citation type="journal article" date="2006" name="Nature">
        <title>The DNA sequence and biological annotation of human chromosome 1.</title>
        <authorList>
            <person name="Gregory S.G."/>
            <person name="Barlow K.F."/>
            <person name="McLay K.E."/>
            <person name="Kaul R."/>
            <person name="Swarbreck D."/>
            <person name="Dunham A."/>
            <person name="Scott C.E."/>
            <person name="Howe K.L."/>
            <person name="Woodfine K."/>
            <person name="Spencer C.C.A."/>
            <person name="Jones M.C."/>
            <person name="Gillson C."/>
            <person name="Searle S."/>
            <person name="Zhou Y."/>
            <person name="Kokocinski F."/>
            <person name="McDonald L."/>
            <person name="Evans R."/>
            <person name="Phillips K."/>
            <person name="Atkinson A."/>
            <person name="Cooper R."/>
            <person name="Jones C."/>
            <person name="Hall R.E."/>
            <person name="Andrews T.D."/>
            <person name="Lloyd C."/>
            <person name="Ainscough R."/>
            <person name="Almeida J.P."/>
            <person name="Ambrose K.D."/>
            <person name="Anderson F."/>
            <person name="Andrew R.W."/>
            <person name="Ashwell R.I.S."/>
            <person name="Aubin K."/>
            <person name="Babbage A.K."/>
            <person name="Bagguley C.L."/>
            <person name="Bailey J."/>
            <person name="Beasley H."/>
            <person name="Bethel G."/>
            <person name="Bird C.P."/>
            <person name="Bray-Allen S."/>
            <person name="Brown J.Y."/>
            <person name="Brown A.J."/>
            <person name="Buckley D."/>
            <person name="Burton J."/>
            <person name="Bye J."/>
            <person name="Carder C."/>
            <person name="Chapman J.C."/>
            <person name="Clark S.Y."/>
            <person name="Clarke G."/>
            <person name="Clee C."/>
            <person name="Cobley V."/>
            <person name="Collier R.E."/>
            <person name="Corby N."/>
            <person name="Coville G.J."/>
            <person name="Davies J."/>
            <person name="Deadman R."/>
            <person name="Dunn M."/>
            <person name="Earthrowl M."/>
            <person name="Ellington A.G."/>
            <person name="Errington H."/>
            <person name="Frankish A."/>
            <person name="Frankland J."/>
            <person name="French L."/>
            <person name="Garner P."/>
            <person name="Garnett J."/>
            <person name="Gay L."/>
            <person name="Ghori M.R.J."/>
            <person name="Gibson R."/>
            <person name="Gilby L.M."/>
            <person name="Gillett W."/>
            <person name="Glithero R.J."/>
            <person name="Grafham D.V."/>
            <person name="Griffiths C."/>
            <person name="Griffiths-Jones S."/>
            <person name="Grocock R."/>
            <person name="Hammond S."/>
            <person name="Harrison E.S.I."/>
            <person name="Hart E."/>
            <person name="Haugen E."/>
            <person name="Heath P.D."/>
            <person name="Holmes S."/>
            <person name="Holt K."/>
            <person name="Howden P.J."/>
            <person name="Hunt A.R."/>
            <person name="Hunt S.E."/>
            <person name="Hunter G."/>
            <person name="Isherwood J."/>
            <person name="James R."/>
            <person name="Johnson C."/>
            <person name="Johnson D."/>
            <person name="Joy A."/>
            <person name="Kay M."/>
            <person name="Kershaw J.K."/>
            <person name="Kibukawa M."/>
            <person name="Kimberley A.M."/>
            <person name="King A."/>
            <person name="Knights A.J."/>
            <person name="Lad H."/>
            <person name="Laird G."/>
            <person name="Lawlor S."/>
            <person name="Leongamornlert D.A."/>
            <person name="Lloyd D.M."/>
            <person name="Loveland J."/>
            <person name="Lovell J."/>
            <person name="Lush M.J."/>
            <person name="Lyne R."/>
            <person name="Martin S."/>
            <person name="Mashreghi-Mohammadi M."/>
            <person name="Matthews L."/>
            <person name="Matthews N.S.W."/>
            <person name="McLaren S."/>
            <person name="Milne S."/>
            <person name="Mistry S."/>
            <person name="Moore M.J.F."/>
            <person name="Nickerson T."/>
            <person name="O'Dell C.N."/>
            <person name="Oliver K."/>
            <person name="Palmeiri A."/>
            <person name="Palmer S.A."/>
            <person name="Parker A."/>
            <person name="Patel D."/>
            <person name="Pearce A.V."/>
            <person name="Peck A.I."/>
            <person name="Pelan S."/>
            <person name="Phelps K."/>
            <person name="Phillimore B.J."/>
            <person name="Plumb R."/>
            <person name="Rajan J."/>
            <person name="Raymond C."/>
            <person name="Rouse G."/>
            <person name="Saenphimmachak C."/>
            <person name="Sehra H.K."/>
            <person name="Sheridan E."/>
            <person name="Shownkeen R."/>
            <person name="Sims S."/>
            <person name="Skuce C.D."/>
            <person name="Smith M."/>
            <person name="Steward C."/>
            <person name="Subramanian S."/>
            <person name="Sycamore N."/>
            <person name="Tracey A."/>
            <person name="Tromans A."/>
            <person name="Van Helmond Z."/>
            <person name="Wall M."/>
            <person name="Wallis J.M."/>
            <person name="White S."/>
            <person name="Whitehead S.L."/>
            <person name="Wilkinson J.E."/>
            <person name="Willey D.L."/>
            <person name="Williams H."/>
            <person name="Wilming L."/>
            <person name="Wray P.W."/>
            <person name="Wu Z."/>
            <person name="Coulson A."/>
            <person name="Vaudin M."/>
            <person name="Sulston J.E."/>
            <person name="Durbin R.M."/>
            <person name="Hubbard T."/>
            <person name="Wooster R."/>
            <person name="Dunham I."/>
            <person name="Carter N.P."/>
            <person name="McVean G."/>
            <person name="Ross M.T."/>
            <person name="Harrow J."/>
            <person name="Olson M.V."/>
            <person name="Beck S."/>
            <person name="Rogers J."/>
            <person name="Bentley D.R."/>
        </authorList>
    </citation>
    <scope>NUCLEOTIDE SEQUENCE [LARGE SCALE GENOMIC DNA]</scope>
</reference>
<reference key="2">
    <citation type="submission" date="2005-09" db="EMBL/GenBank/DDBJ databases">
        <authorList>
            <person name="Mural R.J."/>
            <person name="Istrail S."/>
            <person name="Sutton G.G."/>
            <person name="Florea L."/>
            <person name="Halpern A.L."/>
            <person name="Mobarry C.M."/>
            <person name="Lippert R."/>
            <person name="Walenz B."/>
            <person name="Shatkay H."/>
            <person name="Dew I."/>
            <person name="Miller J.R."/>
            <person name="Flanigan M.J."/>
            <person name="Edwards N.J."/>
            <person name="Bolanos R."/>
            <person name="Fasulo D."/>
            <person name="Halldorsson B.V."/>
            <person name="Hannenhalli S."/>
            <person name="Turner R."/>
            <person name="Yooseph S."/>
            <person name="Lu F."/>
            <person name="Nusskern D.R."/>
            <person name="Shue B.C."/>
            <person name="Zheng X.H."/>
            <person name="Zhong F."/>
            <person name="Delcher A.L."/>
            <person name="Huson D.H."/>
            <person name="Kravitz S.A."/>
            <person name="Mouchard L."/>
            <person name="Reinert K."/>
            <person name="Remington K.A."/>
            <person name="Clark A.G."/>
            <person name="Waterman M.S."/>
            <person name="Eichler E.E."/>
            <person name="Adams M.D."/>
            <person name="Hunkapiller M.W."/>
            <person name="Myers E.W."/>
            <person name="Venter J.C."/>
        </authorList>
    </citation>
    <scope>NUCLEOTIDE SEQUENCE [LARGE SCALE GENOMIC DNA]</scope>
</reference>
<reference key="3">
    <citation type="journal article" date="2004" name="Genome Res.">
        <title>The status, quality, and expansion of the NIH full-length cDNA project: the Mammalian Gene Collection (MGC).</title>
        <authorList>
            <consortium name="The MGC Project Team"/>
        </authorList>
    </citation>
    <scope>NUCLEOTIDE SEQUENCE [LARGE SCALE MRNA]</scope>
</reference>
<reference key="4">
    <citation type="journal article" date="2005" name="J. Invest. Dermatol.">
        <title>Late cornified envelope family in differentiating epithelia -- response to calcium and ultraviolet irradiation.</title>
        <authorList>
            <person name="Jackson B."/>
            <person name="Tilli C.L."/>
            <person name="Hardman M."/>
            <person name="Avilion A."/>
            <person name="Macleod M."/>
            <person name="Ashcroft G."/>
            <person name="Byrne C."/>
        </authorList>
    </citation>
    <scope>NOMENCLATURE</scope>
    <scope>TISSUE SPECIFICITY</scope>
    <scope>INDUCTION BY UVB</scope>
</reference>
<reference key="5">
    <citation type="journal article" date="2023" name="J. Invest. Dermatol.">
        <title>CYSRT1: An Antimicrobial Epidermal Protein that Can Interact with Late Cornified Envelope Proteins.</title>
        <authorList>
            <person name="Niehues H."/>
            <person name="Rikken G."/>
            <person name="Kersten F.F.J."/>
            <person name="Eeftens J.M."/>
            <person name="van Vlijmen-Willems I.M.J.J."/>
            <person name="Rodijk-Olthuis D."/>
            <person name="Jansen P.A.M."/>
            <person name="Hendriks W.J.A.J."/>
            <person name="Ederveen T.H.A."/>
            <person name="Schalkwijk J."/>
            <person name="van den Bogaard E.H."/>
            <person name="Zeeuwen P.L.J.M."/>
        </authorList>
    </citation>
    <scope>INTERACTION WITH CYSRT1</scope>
</reference>
<accession>Q5T7P3</accession>
<accession>A4IF40</accession>
<sequence length="118" mass="11626">MSCQQNQQQCQPPPKCIPKCPPKCLTPRCPPKCPPKCPPVSSCCSVSSGGCCGSSSGGSCGSSSGGCCSSGGGGCCLSHHRRRRSHCHRPQSSGCCSQPSGGSSCCGGGSGQHSGGCC</sequence>
<proteinExistence type="evidence at protein level"/>
<protein>
    <recommendedName>
        <fullName>Late cornified envelope protein 1B</fullName>
    </recommendedName>
    <alternativeName>
        <fullName>Late envelope protein 2</fullName>
    </alternativeName>
    <alternativeName>
        <fullName>Small proline-rich-like epidermal differentiation complex protein 2A</fullName>
    </alternativeName>
</protein>
<keyword id="KW-0417">Keratinization</keyword>
<keyword id="KW-1185">Reference proteome</keyword>
<dbReference type="EMBL" id="AL162596">
    <property type="status" value="NOT_ANNOTATED_CDS"/>
    <property type="molecule type" value="Genomic_DNA"/>
</dbReference>
<dbReference type="EMBL" id="CH471121">
    <property type="protein sequence ID" value="EAW53363.1"/>
    <property type="molecule type" value="Genomic_DNA"/>
</dbReference>
<dbReference type="EMBL" id="BC104232">
    <property type="protein sequence ID" value="AAI04233.1"/>
    <property type="molecule type" value="mRNA"/>
</dbReference>
<dbReference type="EMBL" id="BC104233">
    <property type="protein sequence ID" value="AAI04234.1"/>
    <property type="molecule type" value="mRNA"/>
</dbReference>
<dbReference type="CCDS" id="CCDS1027.1"/>
<dbReference type="RefSeq" id="NP_848126.1">
    <property type="nucleotide sequence ID" value="NM_178349.2"/>
</dbReference>
<dbReference type="BioGRID" id="131639">
    <property type="interactions" value="85"/>
</dbReference>
<dbReference type="FunCoup" id="Q5T7P3">
    <property type="interactions" value="36"/>
</dbReference>
<dbReference type="IntAct" id="Q5T7P3">
    <property type="interactions" value="76"/>
</dbReference>
<dbReference type="STRING" id="9606.ENSP00000353203"/>
<dbReference type="BioMuta" id="LCE1B"/>
<dbReference type="DMDM" id="74745414"/>
<dbReference type="MassIVE" id="Q5T7P3"/>
<dbReference type="PaxDb" id="9606-ENSP00000353203"/>
<dbReference type="PeptideAtlas" id="Q5T7P3"/>
<dbReference type="ProteomicsDB" id="64674"/>
<dbReference type="Pumba" id="Q5T7P3"/>
<dbReference type="Antibodypedia" id="47013">
    <property type="antibodies" value="58 antibodies from 11 providers"/>
</dbReference>
<dbReference type="DNASU" id="353132"/>
<dbReference type="Ensembl" id="ENST00000360090.4">
    <property type="protein sequence ID" value="ENSP00000353203.3"/>
    <property type="gene ID" value="ENSG00000196734.9"/>
</dbReference>
<dbReference type="GeneID" id="353132"/>
<dbReference type="KEGG" id="hsa:353132"/>
<dbReference type="MANE-Select" id="ENST00000360090.4">
    <property type="protein sequence ID" value="ENSP00000353203.3"/>
    <property type="RefSeq nucleotide sequence ID" value="NM_178349.2"/>
    <property type="RefSeq protein sequence ID" value="NP_848126.1"/>
</dbReference>
<dbReference type="UCSC" id="uc001faq.3">
    <property type="organism name" value="human"/>
</dbReference>
<dbReference type="AGR" id="HGNC:16611"/>
<dbReference type="CTD" id="353132"/>
<dbReference type="GeneCards" id="LCE1B"/>
<dbReference type="HGNC" id="HGNC:16611">
    <property type="gene designation" value="LCE1B"/>
</dbReference>
<dbReference type="HPA" id="ENSG00000196734">
    <property type="expression patterns" value="Tissue enriched (skin)"/>
</dbReference>
<dbReference type="MIM" id="612604">
    <property type="type" value="gene"/>
</dbReference>
<dbReference type="neXtProt" id="NX_Q5T7P3"/>
<dbReference type="OpenTargets" id="ENSG00000196734"/>
<dbReference type="PharmGKB" id="PA38171"/>
<dbReference type="VEuPathDB" id="HostDB:ENSG00000196734"/>
<dbReference type="GeneTree" id="ENSGT00950000183278"/>
<dbReference type="HOGENOM" id="CLU_152038_0_0_1"/>
<dbReference type="InParanoid" id="Q5T7P3"/>
<dbReference type="OMA" id="CYLSHHR"/>
<dbReference type="PAN-GO" id="Q5T7P3">
    <property type="GO annotations" value="0 GO annotations based on evolutionary models"/>
</dbReference>
<dbReference type="PathwayCommons" id="Q5T7P3"/>
<dbReference type="Reactome" id="R-HSA-6809371">
    <property type="pathway name" value="Formation of the cornified envelope"/>
</dbReference>
<dbReference type="SignaLink" id="Q5T7P3"/>
<dbReference type="BioGRID-ORCS" id="353132">
    <property type="hits" value="39 hits in 1039 CRISPR screens"/>
</dbReference>
<dbReference type="GenomeRNAi" id="353132"/>
<dbReference type="Pharos" id="Q5T7P3">
    <property type="development level" value="Tbio"/>
</dbReference>
<dbReference type="PRO" id="PR:Q5T7P3"/>
<dbReference type="Proteomes" id="UP000005640">
    <property type="component" value="Chromosome 1"/>
</dbReference>
<dbReference type="RNAct" id="Q5T7P3">
    <property type="molecule type" value="protein"/>
</dbReference>
<dbReference type="Bgee" id="ENSG00000196734">
    <property type="expression patterns" value="Expressed in upper leg skin and 73 other cell types or tissues"/>
</dbReference>
<dbReference type="GO" id="GO:0042802">
    <property type="term" value="F:identical protein binding"/>
    <property type="evidence" value="ECO:0000353"/>
    <property type="project" value="IntAct"/>
</dbReference>
<dbReference type="GO" id="GO:0031424">
    <property type="term" value="P:keratinization"/>
    <property type="evidence" value="ECO:0007669"/>
    <property type="project" value="UniProtKB-KW"/>
</dbReference>
<dbReference type="InterPro" id="IPR028205">
    <property type="entry name" value="LCE"/>
</dbReference>
<dbReference type="Pfam" id="PF14672">
    <property type="entry name" value="LCE"/>
    <property type="match status" value="2"/>
</dbReference>
<dbReference type="PRINTS" id="PR00021">
    <property type="entry name" value="PRORICH"/>
</dbReference>
<gene>
    <name type="primary">LCE1B</name>
    <name type="synonym">LEP2</name>
    <name type="synonym">SPRL2A</name>
</gene>
<organism>
    <name type="scientific">Homo sapiens</name>
    <name type="common">Human</name>
    <dbReference type="NCBI Taxonomy" id="9606"/>
    <lineage>
        <taxon>Eukaryota</taxon>
        <taxon>Metazoa</taxon>
        <taxon>Chordata</taxon>
        <taxon>Craniata</taxon>
        <taxon>Vertebrata</taxon>
        <taxon>Euteleostomi</taxon>
        <taxon>Mammalia</taxon>
        <taxon>Eutheria</taxon>
        <taxon>Euarchontoglires</taxon>
        <taxon>Primates</taxon>
        <taxon>Haplorrhini</taxon>
        <taxon>Catarrhini</taxon>
        <taxon>Hominidae</taxon>
        <taxon>Homo</taxon>
    </lineage>
</organism>